<feature type="signal peptide" evidence="1">
    <location>
        <begin position="1"/>
        <end position="17"/>
    </location>
</feature>
<feature type="chain" id="PRO_0000020160" description="Putative outer membrane protein TC_0650">
    <location>
        <begin position="18"/>
        <end position="261"/>
    </location>
</feature>
<dbReference type="EMBL" id="AE002160">
    <property type="protein sequence ID" value="AAF39476.1"/>
    <property type="molecule type" value="Genomic_DNA"/>
</dbReference>
<dbReference type="PIR" id="H81679">
    <property type="entry name" value="H81679"/>
</dbReference>
<dbReference type="RefSeq" id="WP_010231115.1">
    <property type="nucleotide sequence ID" value="NZ_CP063055.1"/>
</dbReference>
<dbReference type="GeneID" id="1246011"/>
<dbReference type="KEGG" id="cmu:TC_0650"/>
<dbReference type="eggNOG" id="COG0546">
    <property type="taxonomic scope" value="Bacteria"/>
</dbReference>
<dbReference type="HOGENOM" id="CLU_1064338_0_0_0"/>
<dbReference type="OrthoDB" id="18892at2"/>
<dbReference type="Proteomes" id="UP000000800">
    <property type="component" value="Chromosome"/>
</dbReference>
<dbReference type="GO" id="GO:0009279">
    <property type="term" value="C:cell outer membrane"/>
    <property type="evidence" value="ECO:0007669"/>
    <property type="project" value="UniProtKB-SubCell"/>
</dbReference>
<dbReference type="InterPro" id="IPR022565">
    <property type="entry name" value="DUF2608"/>
</dbReference>
<dbReference type="Pfam" id="PF11019">
    <property type="entry name" value="DUF2608"/>
    <property type="match status" value="1"/>
</dbReference>
<evidence type="ECO:0000255" key="1"/>
<evidence type="ECO:0000305" key="2"/>
<reference key="1">
    <citation type="journal article" date="2000" name="Nucleic Acids Res.">
        <title>Genome sequences of Chlamydia trachomatis MoPn and Chlamydia pneumoniae AR39.</title>
        <authorList>
            <person name="Read T.D."/>
            <person name="Brunham R.C."/>
            <person name="Shen C."/>
            <person name="Gill S.R."/>
            <person name="Heidelberg J.F."/>
            <person name="White O."/>
            <person name="Hickey E.K."/>
            <person name="Peterson J.D."/>
            <person name="Utterback T.R."/>
            <person name="Berry K.J."/>
            <person name="Bass S."/>
            <person name="Linher K.D."/>
            <person name="Weidman J.F."/>
            <person name="Khouri H.M."/>
            <person name="Craven B."/>
            <person name="Bowman C."/>
            <person name="Dodson R.J."/>
            <person name="Gwinn M.L."/>
            <person name="Nelson W.C."/>
            <person name="DeBoy R.T."/>
            <person name="Kolonay J.F."/>
            <person name="McClarty G."/>
            <person name="Salzberg S.L."/>
            <person name="Eisen J.A."/>
            <person name="Fraser C.M."/>
        </authorList>
    </citation>
    <scope>NUCLEOTIDE SEQUENCE [LARGE SCALE GENOMIC DNA]</scope>
    <source>
        <strain>MoPn / Nigg</strain>
    </source>
</reference>
<name>OMPY_CHLMU</name>
<gene>
    <name type="ordered locus">TC_0650</name>
</gene>
<proteinExistence type="inferred from homology"/>
<organism>
    <name type="scientific">Chlamydia muridarum (strain MoPn / Nigg)</name>
    <dbReference type="NCBI Taxonomy" id="243161"/>
    <lineage>
        <taxon>Bacteria</taxon>
        <taxon>Pseudomonadati</taxon>
        <taxon>Chlamydiota</taxon>
        <taxon>Chlamydiia</taxon>
        <taxon>Chlamydiales</taxon>
        <taxon>Chlamydiaceae</taxon>
        <taxon>Chlamydia/Chlamydophila group</taxon>
        <taxon>Chlamydia</taxon>
    </lineage>
</organism>
<protein>
    <recommendedName>
        <fullName>Putative outer membrane protein TC_0650</fullName>
    </recommendedName>
</protein>
<keyword id="KW-0998">Cell outer membrane</keyword>
<keyword id="KW-0472">Membrane</keyword>
<keyword id="KW-0732">Signal</keyword>
<sequence length="261" mass="29728">MRFLFAFILLCSPWVSEASQNIVTVKTIHEVASDILYDNTNYWLILDIDDVLFEGAEALSHSSWFERSIQGMRALGASEKEAWEAIYPEWLAIQHQGSIKQIETAIPLLITKVQNQDKIVFAYSERQLCAQNVTFEQLATINLSFDKPNLPYASLPPSISFTKGVLFGAEIHKGLGLQLFLDAQPDLPEKIIYIDNEKYNVMRVGEVCNQKNIPYLGIIYTAPKYLSPTYLPDIAKVQYLFRQKLLSNEAAALLLRHRLDK</sequence>
<comment type="subcellular location">
    <subcellularLocation>
        <location evidence="2">Cell outer membrane</location>
        <topology evidence="2">Peripheral membrane protein</topology>
    </subcellularLocation>
</comment>
<accession>Q9PK23</accession>